<proteinExistence type="inferred from homology"/>
<gene>
    <name type="ordered locus">Rmet_0978</name>
</gene>
<keyword id="KW-1185">Reference proteome</keyword>
<reference key="1">
    <citation type="journal article" date="2010" name="PLoS ONE">
        <title>The complete genome sequence of Cupriavidus metallidurans strain CH34, a master survivalist in harsh and anthropogenic environments.</title>
        <authorList>
            <person name="Janssen P.J."/>
            <person name="Van Houdt R."/>
            <person name="Moors H."/>
            <person name="Monsieurs P."/>
            <person name="Morin N."/>
            <person name="Michaux A."/>
            <person name="Benotmane M.A."/>
            <person name="Leys N."/>
            <person name="Vallaeys T."/>
            <person name="Lapidus A."/>
            <person name="Monchy S."/>
            <person name="Medigue C."/>
            <person name="Taghavi S."/>
            <person name="McCorkle S."/>
            <person name="Dunn J."/>
            <person name="van der Lelie D."/>
            <person name="Mergeay M."/>
        </authorList>
    </citation>
    <scope>NUCLEOTIDE SEQUENCE [LARGE SCALE GENOMIC DNA]</scope>
    <source>
        <strain>ATCC 43123 / DSM 2839 / NBRC 102507 / CH34</strain>
    </source>
</reference>
<name>Y978_CUPMC</name>
<organism>
    <name type="scientific">Cupriavidus metallidurans (strain ATCC 43123 / DSM 2839 / NBRC 102507 / CH34)</name>
    <name type="common">Ralstonia metallidurans</name>
    <dbReference type="NCBI Taxonomy" id="266264"/>
    <lineage>
        <taxon>Bacteria</taxon>
        <taxon>Pseudomonadati</taxon>
        <taxon>Pseudomonadota</taxon>
        <taxon>Betaproteobacteria</taxon>
        <taxon>Burkholderiales</taxon>
        <taxon>Burkholderiaceae</taxon>
        <taxon>Cupriavidus</taxon>
    </lineage>
</organism>
<protein>
    <recommendedName>
        <fullName evidence="1">UPF0246 protein Rmet_0978</fullName>
    </recommendedName>
</protein>
<comment type="similarity">
    <text evidence="1">Belongs to the UPF0246 family.</text>
</comment>
<accession>Q1LPR2</accession>
<feature type="chain" id="PRO_0000262047" description="UPF0246 protein Rmet_0978">
    <location>
        <begin position="1"/>
        <end position="261"/>
    </location>
</feature>
<dbReference type="EMBL" id="CP000352">
    <property type="protein sequence ID" value="ABF07864.1"/>
    <property type="molecule type" value="Genomic_DNA"/>
</dbReference>
<dbReference type="RefSeq" id="WP_011515782.1">
    <property type="nucleotide sequence ID" value="NC_007973.1"/>
</dbReference>
<dbReference type="SMR" id="Q1LPR2"/>
<dbReference type="STRING" id="266264.Rmet_0978"/>
<dbReference type="KEGG" id="rme:Rmet_0978"/>
<dbReference type="eggNOG" id="COG3022">
    <property type="taxonomic scope" value="Bacteria"/>
</dbReference>
<dbReference type="HOGENOM" id="CLU_061989_0_0_4"/>
<dbReference type="Proteomes" id="UP000002429">
    <property type="component" value="Chromosome"/>
</dbReference>
<dbReference type="GO" id="GO:0005829">
    <property type="term" value="C:cytosol"/>
    <property type="evidence" value="ECO:0007669"/>
    <property type="project" value="TreeGrafter"/>
</dbReference>
<dbReference type="GO" id="GO:0033194">
    <property type="term" value="P:response to hydroperoxide"/>
    <property type="evidence" value="ECO:0007669"/>
    <property type="project" value="TreeGrafter"/>
</dbReference>
<dbReference type="HAMAP" id="MF_00652">
    <property type="entry name" value="UPF0246"/>
    <property type="match status" value="1"/>
</dbReference>
<dbReference type="InterPro" id="IPR005583">
    <property type="entry name" value="YaaA"/>
</dbReference>
<dbReference type="NCBIfam" id="NF002541">
    <property type="entry name" value="PRK02101.1-1"/>
    <property type="match status" value="1"/>
</dbReference>
<dbReference type="NCBIfam" id="NF002542">
    <property type="entry name" value="PRK02101.1-3"/>
    <property type="match status" value="1"/>
</dbReference>
<dbReference type="PANTHER" id="PTHR30283:SF4">
    <property type="entry name" value="PEROXIDE STRESS RESISTANCE PROTEIN YAAA"/>
    <property type="match status" value="1"/>
</dbReference>
<dbReference type="PANTHER" id="PTHR30283">
    <property type="entry name" value="PEROXIDE STRESS RESPONSE PROTEIN YAAA"/>
    <property type="match status" value="1"/>
</dbReference>
<dbReference type="Pfam" id="PF03883">
    <property type="entry name" value="H2O2_YaaD"/>
    <property type="match status" value="1"/>
</dbReference>
<sequence length="261" mass="29645">MLIVLSPAKSLDYETPPRVKSHTLPRFIDRSATLIERLRKLAPQDVASLMDISDKLAVLNVTRYADWSPEFTAANSKQAVLAFNGDVYDGLDAKTLSTDDLAFAQKHIRILSGLYGVLRPMDWMQPYRLEMGTRLDNAAGKDLYAFWGDDVTALINKDMAELKHEGSLTLVNLASEEYFKVVRPKVLAARVITPVFEDWKGGRYKIISFHAKRARGTMARYAVTHRVTDPAQLKRFNEDGYAFDKAASDDARWVFRRRLED</sequence>
<evidence type="ECO:0000255" key="1">
    <source>
        <dbReference type="HAMAP-Rule" id="MF_00652"/>
    </source>
</evidence>